<protein>
    <recommendedName>
        <fullName evidence="1">Large ribosomal subunit protein uL16c</fullName>
    </recommendedName>
    <alternativeName>
        <fullName evidence="2">50S ribosomal protein L16, plastid</fullName>
    </alternativeName>
</protein>
<accession>A8W3F8</accession>
<organism>
    <name type="scientific">Cuscuta exaltata</name>
    <name type="common">Tall dodder</name>
    <dbReference type="NCBI Taxonomy" id="476139"/>
    <lineage>
        <taxon>Eukaryota</taxon>
        <taxon>Viridiplantae</taxon>
        <taxon>Streptophyta</taxon>
        <taxon>Embryophyta</taxon>
        <taxon>Tracheophyta</taxon>
        <taxon>Spermatophyta</taxon>
        <taxon>Magnoliopsida</taxon>
        <taxon>eudicotyledons</taxon>
        <taxon>Gunneridae</taxon>
        <taxon>Pentapetalae</taxon>
        <taxon>asterids</taxon>
        <taxon>lamiids</taxon>
        <taxon>Solanales</taxon>
        <taxon>Convolvulaceae</taxon>
        <taxon>Cuscuteae</taxon>
        <taxon>Cuscuta</taxon>
        <taxon>Cuscuta subgen. Monogynella</taxon>
    </lineage>
</organism>
<keyword id="KW-0934">Plastid</keyword>
<keyword id="KW-0687">Ribonucleoprotein</keyword>
<keyword id="KW-0689">Ribosomal protein</keyword>
<dbReference type="EMBL" id="EU189132">
    <property type="protein sequence ID" value="ABW83729.1"/>
    <property type="molecule type" value="Genomic_DNA"/>
</dbReference>
<dbReference type="RefSeq" id="YP_001542565.1">
    <property type="nucleotide sequence ID" value="NC_009963.1"/>
</dbReference>
<dbReference type="SMR" id="A8W3F8"/>
<dbReference type="GeneID" id="5729613"/>
<dbReference type="GO" id="GO:0005762">
    <property type="term" value="C:mitochondrial large ribosomal subunit"/>
    <property type="evidence" value="ECO:0007669"/>
    <property type="project" value="TreeGrafter"/>
</dbReference>
<dbReference type="GO" id="GO:0009536">
    <property type="term" value="C:plastid"/>
    <property type="evidence" value="ECO:0007669"/>
    <property type="project" value="UniProtKB-SubCell"/>
</dbReference>
<dbReference type="GO" id="GO:0019843">
    <property type="term" value="F:rRNA binding"/>
    <property type="evidence" value="ECO:0007669"/>
    <property type="project" value="InterPro"/>
</dbReference>
<dbReference type="GO" id="GO:0003735">
    <property type="term" value="F:structural constituent of ribosome"/>
    <property type="evidence" value="ECO:0007669"/>
    <property type="project" value="InterPro"/>
</dbReference>
<dbReference type="GO" id="GO:0032543">
    <property type="term" value="P:mitochondrial translation"/>
    <property type="evidence" value="ECO:0007669"/>
    <property type="project" value="TreeGrafter"/>
</dbReference>
<dbReference type="CDD" id="cd01433">
    <property type="entry name" value="Ribosomal_L16_L10e"/>
    <property type="match status" value="1"/>
</dbReference>
<dbReference type="FunFam" id="3.90.1170.10:FF:000001">
    <property type="entry name" value="50S ribosomal protein L16"/>
    <property type="match status" value="1"/>
</dbReference>
<dbReference type="Gene3D" id="3.90.1170.10">
    <property type="entry name" value="Ribosomal protein L10e/L16"/>
    <property type="match status" value="1"/>
</dbReference>
<dbReference type="HAMAP" id="MF_01342">
    <property type="entry name" value="Ribosomal_uL16"/>
    <property type="match status" value="1"/>
</dbReference>
<dbReference type="InterPro" id="IPR047873">
    <property type="entry name" value="Ribosomal_uL16"/>
</dbReference>
<dbReference type="InterPro" id="IPR000114">
    <property type="entry name" value="Ribosomal_uL16_bact-type"/>
</dbReference>
<dbReference type="InterPro" id="IPR020798">
    <property type="entry name" value="Ribosomal_uL16_CS"/>
</dbReference>
<dbReference type="InterPro" id="IPR016180">
    <property type="entry name" value="Ribosomal_uL16_dom"/>
</dbReference>
<dbReference type="InterPro" id="IPR036920">
    <property type="entry name" value="Ribosomal_uL16_sf"/>
</dbReference>
<dbReference type="NCBIfam" id="TIGR01164">
    <property type="entry name" value="rplP_bact"/>
    <property type="match status" value="1"/>
</dbReference>
<dbReference type="PANTHER" id="PTHR12220">
    <property type="entry name" value="50S/60S RIBOSOMAL PROTEIN L16"/>
    <property type="match status" value="1"/>
</dbReference>
<dbReference type="PANTHER" id="PTHR12220:SF13">
    <property type="entry name" value="LARGE RIBOSOMAL SUBUNIT PROTEIN UL16M"/>
    <property type="match status" value="1"/>
</dbReference>
<dbReference type="Pfam" id="PF00252">
    <property type="entry name" value="Ribosomal_L16"/>
    <property type="match status" value="1"/>
</dbReference>
<dbReference type="PRINTS" id="PR00060">
    <property type="entry name" value="RIBOSOMALL16"/>
</dbReference>
<dbReference type="SUPFAM" id="SSF54686">
    <property type="entry name" value="Ribosomal protein L16p/L10e"/>
    <property type="match status" value="1"/>
</dbReference>
<dbReference type="PROSITE" id="PS00586">
    <property type="entry name" value="RIBOSOMAL_L16_1"/>
    <property type="match status" value="1"/>
</dbReference>
<dbReference type="PROSITE" id="PS00701">
    <property type="entry name" value="RIBOSOMAL_L16_2"/>
    <property type="match status" value="1"/>
</dbReference>
<proteinExistence type="inferred from homology"/>
<name>RK16_CUSEX</name>
<sequence length="137" mass="15659">MLSPKRTRFRKQHRGKLKGISYRGNHICFGRYALQALEPAWLTSRQIEAGRRAMTRNARRGGKIWVRIFPDKPVTVRPAETRMGSGKGCPEYWVAVVKPGRILYEMGGVTKKIARRAFSIAASKMPIRTQFIISEIE</sequence>
<feature type="chain" id="PRO_0000354627" description="Large ribosomal subunit protein uL16c">
    <location>
        <begin position="1"/>
        <end position="137"/>
    </location>
</feature>
<gene>
    <name evidence="1" type="primary">rpl16</name>
</gene>
<geneLocation type="plastid"/>
<comment type="subunit">
    <text evidence="1">Part of the 50S ribosomal subunit.</text>
</comment>
<comment type="subcellular location">
    <subcellularLocation>
        <location>Plastid</location>
    </subcellularLocation>
</comment>
<comment type="similarity">
    <text evidence="1">Belongs to the universal ribosomal protein uL16 family.</text>
</comment>
<comment type="caution">
    <text evidence="2">Young tissue from this organism is photosynthetic and contains some thylakoids, although the photosynthetic activity does not exceed the light compensation point.</text>
</comment>
<reference key="1">
    <citation type="journal article" date="2007" name="BMC Plant Biol.">
        <title>Complete plastid genome sequences suggest strong selection for retention of photosynthetic genes in the parasitic plant genus Cuscuta.</title>
        <authorList>
            <person name="McNeal J.R."/>
            <person name="Kuehl J.V."/>
            <person name="Boore J.L."/>
            <person name="dePamphilis C.W."/>
        </authorList>
    </citation>
    <scope>NUCLEOTIDE SEQUENCE [LARGE SCALE GENOMIC DNA]</scope>
</reference>
<evidence type="ECO:0000255" key="1">
    <source>
        <dbReference type="HAMAP-Rule" id="MF_01342"/>
    </source>
</evidence>
<evidence type="ECO:0000305" key="2"/>